<feature type="signal peptide" evidence="2">
    <location>
        <begin position="1"/>
        <end position="27"/>
    </location>
</feature>
<feature type="chain" id="PRO_0000416724" description="Membrane glycoprotein US9">
    <location>
        <begin position="28"/>
        <end position="247"/>
    </location>
</feature>
<feature type="topological domain" description="Lumenal" evidence="2">
    <location>
        <begin position="28"/>
        <end position="192"/>
    </location>
</feature>
<feature type="transmembrane region" description="Helical" evidence="2">
    <location>
        <begin position="193"/>
        <end position="213"/>
    </location>
</feature>
<feature type="topological domain" description="Cytoplasmic" evidence="2">
    <location>
        <begin position="214"/>
        <end position="247"/>
    </location>
</feature>
<feature type="domain" description="Ig-like H-type">
    <location>
        <begin position="72"/>
        <end position="168"/>
    </location>
</feature>
<feature type="glycosylation site" description="N-linked (GlcNAc...) asparagine; by host" evidence="2">
    <location>
        <position position="97"/>
    </location>
</feature>
<feature type="glycosylation site" description="N-linked (GlcNAc...) asparagine; by host" evidence="2">
    <location>
        <position position="158"/>
    </location>
</feature>
<feature type="disulfide bond" evidence="1">
    <location>
        <begin position="81"/>
        <end position="164"/>
    </location>
</feature>
<name>US09_HCMVM</name>
<protein>
    <recommendedName>
        <fullName>Membrane glycoprotein US9</fullName>
    </recommendedName>
</protein>
<sequence>MILWSPSTCSFFWHWCLIAVSVLSSRSKESLRLSWSSDESSASSSSRICPLSNSKSVRLPQYPRGFGDVSGYRVSSSVSECYVQHGVLVAAWLVRGNFSDTAPRAYGTWGNERSATHFKVGAPQLENDGALRYETELPQVDARLSYVMLTVYPCSACNRSVLHCRPASRLPWLPLRVTPSDLERLFAERRYLTFLYVVLVQFVKHVALFSFGVQVACCVYLRWIRPWVRGRHRATGRTSREEEAKDD</sequence>
<accession>F5HC33</accession>
<dbReference type="EMBL" id="AY446894">
    <property type="protein sequence ID" value="AAR31698.1"/>
    <property type="molecule type" value="Genomic_DNA"/>
</dbReference>
<dbReference type="RefSeq" id="YP_081594.1">
    <property type="nucleotide sequence ID" value="NC_006273.2"/>
</dbReference>
<dbReference type="GlyCosmos" id="F5HC33">
    <property type="glycosylation" value="2 sites, No reported glycans"/>
</dbReference>
<dbReference type="DNASU" id="3077455"/>
<dbReference type="GeneID" id="3077455"/>
<dbReference type="KEGG" id="vg:3077455"/>
<dbReference type="Reactome" id="R-HSA-9609690">
    <property type="pathway name" value="HCMV Early Events"/>
</dbReference>
<dbReference type="Proteomes" id="UP000000938">
    <property type="component" value="Segment"/>
</dbReference>
<dbReference type="GO" id="GO:0044167">
    <property type="term" value="C:host cell endoplasmic reticulum membrane"/>
    <property type="evidence" value="ECO:0007669"/>
    <property type="project" value="UniProtKB-SubCell"/>
</dbReference>
<dbReference type="GO" id="GO:0044178">
    <property type="term" value="C:host cell Golgi membrane"/>
    <property type="evidence" value="ECO:0007669"/>
    <property type="project" value="UniProtKB-SubCell"/>
</dbReference>
<dbReference type="GO" id="GO:0044163">
    <property type="term" value="C:host cytoskeleton"/>
    <property type="evidence" value="ECO:0007669"/>
    <property type="project" value="UniProtKB-SubCell"/>
</dbReference>
<dbReference type="GO" id="GO:0016020">
    <property type="term" value="C:membrane"/>
    <property type="evidence" value="ECO:0007669"/>
    <property type="project" value="UniProtKB-KW"/>
</dbReference>
<dbReference type="GO" id="GO:0052031">
    <property type="term" value="P:symbiont-mediated perturbation of host defense response"/>
    <property type="evidence" value="ECO:0007669"/>
    <property type="project" value="InterPro"/>
</dbReference>
<dbReference type="InterPro" id="IPR012536">
    <property type="entry name" value="CMV_US"/>
</dbReference>
<dbReference type="Pfam" id="PF08001">
    <property type="entry name" value="CMV_US"/>
    <property type="match status" value="1"/>
</dbReference>
<gene>
    <name type="primary">US9</name>
</gene>
<organism>
    <name type="scientific">Human cytomegalovirus (strain Merlin)</name>
    <name type="common">HHV-5</name>
    <name type="synonym">Human herpesvirus 5</name>
    <dbReference type="NCBI Taxonomy" id="295027"/>
    <lineage>
        <taxon>Viruses</taxon>
        <taxon>Duplodnaviria</taxon>
        <taxon>Heunggongvirae</taxon>
        <taxon>Peploviricota</taxon>
        <taxon>Herviviricetes</taxon>
        <taxon>Herpesvirales</taxon>
        <taxon>Orthoherpesviridae</taxon>
        <taxon>Betaherpesvirinae</taxon>
        <taxon>Cytomegalovirus</taxon>
        <taxon>Cytomegalovirus humanbeta5</taxon>
        <taxon>Human cytomegalovirus</taxon>
    </lineage>
</organism>
<comment type="function">
    <text evidence="1">Influences cell-to-cell spread of virus in polarized cells. Promotes dissemination of virus across cell-cell junctions of polarized epithelial cells, maybe through the association with the cytoskeletal matrix (By similarity).</text>
</comment>
<comment type="subcellular location">
    <subcellularLocation>
        <location>Host endoplasmic reticulum membrane</location>
        <topology>Single-pass type I membrane protein</topology>
    </subcellularLocation>
    <subcellularLocation>
        <location evidence="1">Host cytoplasm</location>
        <location evidence="1">Host cytoskeleton</location>
    </subcellularLocation>
    <subcellularLocation>
        <location evidence="1">Host Golgi apparatus membrane</location>
        <topology evidence="1">Single-pass type I membrane protein</topology>
    </subcellularLocation>
    <text evidence="1">In polarized cells, colocalizes with F-actin in the cortical cytoskeleton which underlies lateral membranes.</text>
</comment>
<comment type="similarity">
    <text evidence="3">Belongs to the cytomegalovirus US6 family.</text>
</comment>
<evidence type="ECO:0000250" key="1"/>
<evidence type="ECO:0000255" key="2"/>
<evidence type="ECO:0000305" key="3"/>
<keyword id="KW-1015">Disulfide bond</keyword>
<keyword id="KW-0325">Glycoprotein</keyword>
<keyword id="KW-1035">Host cytoplasm</keyword>
<keyword id="KW-1037">Host cytoskeleton</keyword>
<keyword id="KW-1038">Host endoplasmic reticulum</keyword>
<keyword id="KW-1040">Host Golgi apparatus</keyword>
<keyword id="KW-1043">Host membrane</keyword>
<keyword id="KW-0393">Immunoglobulin domain</keyword>
<keyword id="KW-0472">Membrane</keyword>
<keyword id="KW-1185">Reference proteome</keyword>
<keyword id="KW-0732">Signal</keyword>
<keyword id="KW-0812">Transmembrane</keyword>
<keyword id="KW-1133">Transmembrane helix</keyword>
<organismHost>
    <name type="scientific">Homo sapiens</name>
    <name type="common">Human</name>
    <dbReference type="NCBI Taxonomy" id="9606"/>
</organismHost>
<proteinExistence type="inferred from homology"/>
<reference key="1">
    <citation type="journal article" date="2004" name="J. Gen. Virol.">
        <title>Genetic content of wild-type human cytomegalovirus.</title>
        <authorList>
            <person name="Dolan A."/>
            <person name="Cunningham C."/>
            <person name="Hector R.D."/>
            <person name="Hassan-Walker A.F."/>
            <person name="Lee L."/>
            <person name="Addison C."/>
            <person name="Dargan D.J."/>
            <person name="McGeoch D.J."/>
            <person name="Gatherer D."/>
            <person name="Emery V.C."/>
            <person name="Griffiths P.D."/>
            <person name="Sinzger C."/>
            <person name="McSharry B.P."/>
            <person name="Wilkinson G.W.G."/>
            <person name="Davison A.J."/>
        </authorList>
    </citation>
    <scope>NUCLEOTIDE SEQUENCE [LARGE SCALE GENOMIC DNA]</scope>
</reference>